<gene>
    <name type="primary">dnaK</name>
    <name type="synonym">hsp70</name>
</gene>
<organism>
    <name type="scientific">Methanosarcina thermophila</name>
    <dbReference type="NCBI Taxonomy" id="2210"/>
    <lineage>
        <taxon>Archaea</taxon>
        <taxon>Methanobacteriati</taxon>
        <taxon>Methanobacteriota</taxon>
        <taxon>Stenosarchaea group</taxon>
        <taxon>Methanomicrobia</taxon>
        <taxon>Methanosarcinales</taxon>
        <taxon>Methanosarcinaceae</taxon>
        <taxon>Methanosarcina</taxon>
    </lineage>
</organism>
<dbReference type="EMBL" id="Y17862">
    <property type="protein sequence ID" value="CAB59514.1"/>
    <property type="molecule type" value="Genomic_DNA"/>
</dbReference>
<dbReference type="SMR" id="Q9UXR0"/>
<dbReference type="GO" id="GO:0005524">
    <property type="term" value="F:ATP binding"/>
    <property type="evidence" value="ECO:0007669"/>
    <property type="project" value="UniProtKB-UniRule"/>
</dbReference>
<dbReference type="GO" id="GO:0140662">
    <property type="term" value="F:ATP-dependent protein folding chaperone"/>
    <property type="evidence" value="ECO:0007669"/>
    <property type="project" value="InterPro"/>
</dbReference>
<dbReference type="GO" id="GO:0051082">
    <property type="term" value="F:unfolded protein binding"/>
    <property type="evidence" value="ECO:0007669"/>
    <property type="project" value="InterPro"/>
</dbReference>
<dbReference type="CDD" id="cd10234">
    <property type="entry name" value="ASKHA_NBD_HSP70_DnaK-like"/>
    <property type="match status" value="1"/>
</dbReference>
<dbReference type="FunFam" id="2.60.34.10:FF:000014">
    <property type="entry name" value="Chaperone protein DnaK HSP70"/>
    <property type="match status" value="1"/>
</dbReference>
<dbReference type="FunFam" id="3.30.420.40:FF:000020">
    <property type="entry name" value="Chaperone protein HscA homolog"/>
    <property type="match status" value="1"/>
</dbReference>
<dbReference type="FunFam" id="3.30.420.40:FF:000545">
    <property type="entry name" value="Endoplasmic reticulum chaperone BiP"/>
    <property type="match status" value="1"/>
</dbReference>
<dbReference type="FunFam" id="1.20.1270.10:FF:000001">
    <property type="entry name" value="Molecular chaperone DnaK"/>
    <property type="match status" value="1"/>
</dbReference>
<dbReference type="FunFam" id="3.90.640.10:FF:000003">
    <property type="entry name" value="Molecular chaperone DnaK"/>
    <property type="match status" value="1"/>
</dbReference>
<dbReference type="Gene3D" id="1.20.1270.10">
    <property type="match status" value="1"/>
</dbReference>
<dbReference type="Gene3D" id="3.30.30.30">
    <property type="match status" value="1"/>
</dbReference>
<dbReference type="Gene3D" id="3.30.420.40">
    <property type="match status" value="3"/>
</dbReference>
<dbReference type="Gene3D" id="3.90.640.10">
    <property type="entry name" value="Actin, Chain A, domain 4"/>
    <property type="match status" value="1"/>
</dbReference>
<dbReference type="Gene3D" id="2.60.34.10">
    <property type="entry name" value="Substrate Binding Domain Of DNAk, Chain A, domain 1"/>
    <property type="match status" value="1"/>
</dbReference>
<dbReference type="HAMAP" id="MF_00332">
    <property type="entry name" value="DnaK"/>
    <property type="match status" value="1"/>
</dbReference>
<dbReference type="InterPro" id="IPR043129">
    <property type="entry name" value="ATPase_NBD"/>
</dbReference>
<dbReference type="InterPro" id="IPR012725">
    <property type="entry name" value="Chaperone_DnaK"/>
</dbReference>
<dbReference type="InterPro" id="IPR018181">
    <property type="entry name" value="Heat_shock_70_CS"/>
</dbReference>
<dbReference type="InterPro" id="IPR029048">
    <property type="entry name" value="HSP70_C_sf"/>
</dbReference>
<dbReference type="InterPro" id="IPR029047">
    <property type="entry name" value="HSP70_peptide-bd_sf"/>
</dbReference>
<dbReference type="InterPro" id="IPR013126">
    <property type="entry name" value="Hsp_70_fam"/>
</dbReference>
<dbReference type="NCBIfam" id="NF001413">
    <property type="entry name" value="PRK00290.1"/>
    <property type="match status" value="1"/>
</dbReference>
<dbReference type="NCBIfam" id="TIGR02350">
    <property type="entry name" value="prok_dnaK"/>
    <property type="match status" value="1"/>
</dbReference>
<dbReference type="PANTHER" id="PTHR19375">
    <property type="entry name" value="HEAT SHOCK PROTEIN 70KDA"/>
    <property type="match status" value="1"/>
</dbReference>
<dbReference type="Pfam" id="PF00012">
    <property type="entry name" value="HSP70"/>
    <property type="match status" value="1"/>
</dbReference>
<dbReference type="PRINTS" id="PR00301">
    <property type="entry name" value="HEATSHOCK70"/>
</dbReference>
<dbReference type="SUPFAM" id="SSF53067">
    <property type="entry name" value="Actin-like ATPase domain"/>
    <property type="match status" value="2"/>
</dbReference>
<dbReference type="SUPFAM" id="SSF100934">
    <property type="entry name" value="Heat shock protein 70kD (HSP70), C-terminal subdomain"/>
    <property type="match status" value="1"/>
</dbReference>
<dbReference type="SUPFAM" id="SSF100920">
    <property type="entry name" value="Heat shock protein 70kD (HSP70), peptide-binding domain"/>
    <property type="match status" value="1"/>
</dbReference>
<dbReference type="PROSITE" id="PS00297">
    <property type="entry name" value="HSP70_1"/>
    <property type="match status" value="1"/>
</dbReference>
<dbReference type="PROSITE" id="PS00329">
    <property type="entry name" value="HSP70_2"/>
    <property type="match status" value="1"/>
</dbReference>
<dbReference type="PROSITE" id="PS01036">
    <property type="entry name" value="HSP70_3"/>
    <property type="match status" value="1"/>
</dbReference>
<sequence>MGKILGIDLGTTNSCMAVMEGGEAVVIPNAEGARTTPSVVGFSKKGEKLVGQVAKRQAISNPENTVYSIKRHMGEPNYKVTLQGKHNTPQEISAMILQKLKADAEAYLGEEIKQAVITVPAYFNDAQRQATKDAGTIAGLEVLRIINEPTAASLAYGLDKGEVEQTILVYDLGGGTFDVSILEIGGGVFEVKATSGDTHLGGDDFDQRIVNYLLAEFKKTEGIDLSKDRAVLQRLTDAAEKAKIELSGVASTNINLPFLTVGPDGEPKHLDIDLTRAQFQKMTEDLLEKTLVSMRQALSDAKLTPNDIDKVILIGGATRMPAVVELVENFTGKKPYKNINPDEAVAIGAAIQAGVLGGEVKDILLLDVTPLTLGIETLGGIATPLIPRNTTIPTRKSQIFSTAADNQPSVEIHVLQGERGIASENKTLGRFTLDGIPPAPRGVPQIEVTFDIDANGILHVSAKDLGTGREQSISIQKPGGLTDAEIERMIKDAELHAEEDRKRKEEVETRNNAETLINAAEKTLKEAGDVATEDQKSKVNAAIDDLKKALEGKDAEEIKAKTEALQEAIYPISTAMYQKAAQQAQQAAGGAAGRTDAKGPEETVVDAIMR</sequence>
<reference key="1">
    <citation type="journal article" date="1999" name="Gene">
        <title>The genes coding for the hsp70 (dnaK) molecular chaperone machine occur in the moderate thermophilic archaeon Methanosarcina thermophila TM-1.</title>
        <authorList>
            <person name="Hofman-Bang J.P."/>
            <person name="Lange M."/>
            <person name="Conway de Macario E."/>
            <person name="Macario A.J.P."/>
            <person name="Ahring B.K."/>
        </authorList>
    </citation>
    <scope>NUCLEOTIDE SEQUENCE [GENOMIC DNA]</scope>
    <source>
        <strain>ATCC 43570 / DSM 1825 / OCM 12 / TM-1</strain>
    </source>
</reference>
<keyword id="KW-0067">ATP-binding</keyword>
<keyword id="KW-0143">Chaperone</keyword>
<keyword id="KW-0547">Nucleotide-binding</keyword>
<name>DNAK_METTE</name>
<evidence type="ECO:0000250" key="1"/>
<evidence type="ECO:0000305" key="2"/>
<proteinExistence type="inferred from homology"/>
<feature type="chain" id="PRO_0000078600" description="Chaperone protein DnaK">
    <location>
        <begin position="1"/>
        <end position="610"/>
    </location>
</feature>
<accession>Q9UXR0</accession>
<protein>
    <recommendedName>
        <fullName>Chaperone protein DnaK</fullName>
    </recommendedName>
    <alternativeName>
        <fullName>HSP70</fullName>
    </alternativeName>
    <alternativeName>
        <fullName>Heat shock 70 kDa protein</fullName>
    </alternativeName>
    <alternativeName>
        <fullName>Heat shock protein 70</fullName>
    </alternativeName>
</protein>
<comment type="function">
    <text evidence="1">Acts as a chaperone.</text>
</comment>
<comment type="similarity">
    <text evidence="2">Belongs to the heat shock protein 70 family.</text>
</comment>